<protein>
    <recommendedName>
        <fullName>Peroxisome assembly protein 26</fullName>
    </recommendedName>
    <alternativeName>
        <fullName>Peroxin-26</fullName>
    </alternativeName>
</protein>
<dbReference type="EMBL" id="AB045996">
    <property type="protein sequence ID" value="BAB01578.1"/>
    <property type="molecule type" value="mRNA"/>
</dbReference>
<dbReference type="EMBL" id="AB056805">
    <property type="protein sequence ID" value="BAB39329.1"/>
    <property type="molecule type" value="mRNA"/>
</dbReference>
<dbReference type="RefSeq" id="NP_001271556.1">
    <property type="nucleotide sequence ID" value="NM_001284627.1"/>
</dbReference>
<dbReference type="SMR" id="Q9BE65"/>
<dbReference type="STRING" id="9541.ENSMFAP00000044960"/>
<dbReference type="eggNOG" id="ENOG502RXMN">
    <property type="taxonomic scope" value="Eukaryota"/>
</dbReference>
<dbReference type="Proteomes" id="UP000233100">
    <property type="component" value="Unplaced"/>
</dbReference>
<dbReference type="GO" id="GO:0005778">
    <property type="term" value="C:peroxisomal membrane"/>
    <property type="evidence" value="ECO:0000250"/>
    <property type="project" value="UniProtKB"/>
</dbReference>
<dbReference type="GO" id="GO:0005777">
    <property type="term" value="C:peroxisome"/>
    <property type="evidence" value="ECO:0000250"/>
    <property type="project" value="UniProtKB"/>
</dbReference>
<dbReference type="GO" id="GO:0051117">
    <property type="term" value="F:ATPase binding"/>
    <property type="evidence" value="ECO:0007669"/>
    <property type="project" value="TreeGrafter"/>
</dbReference>
<dbReference type="GO" id="GO:0044877">
    <property type="term" value="F:protein-containing complex binding"/>
    <property type="evidence" value="ECO:0000250"/>
    <property type="project" value="UniProtKB"/>
</dbReference>
<dbReference type="GO" id="GO:0043495">
    <property type="term" value="F:protein-membrane adaptor activity"/>
    <property type="evidence" value="ECO:0000250"/>
    <property type="project" value="UniProtKB"/>
</dbReference>
<dbReference type="GO" id="GO:0016558">
    <property type="term" value="P:protein import into peroxisome matrix"/>
    <property type="evidence" value="ECO:0000250"/>
    <property type="project" value="UniProtKB"/>
</dbReference>
<dbReference type="GO" id="GO:0045046">
    <property type="term" value="P:protein import into peroxisome membrane"/>
    <property type="evidence" value="ECO:0007669"/>
    <property type="project" value="InterPro"/>
</dbReference>
<dbReference type="GO" id="GO:0022615">
    <property type="term" value="P:protein to membrane docking"/>
    <property type="evidence" value="ECO:0000250"/>
    <property type="project" value="UniProtKB"/>
</dbReference>
<dbReference type="InterPro" id="IPR010797">
    <property type="entry name" value="Pex26"/>
</dbReference>
<dbReference type="PANTHER" id="PTHR16262">
    <property type="entry name" value="PEROXISOME ASSEMBLY PROTEIN 26"/>
    <property type="match status" value="1"/>
</dbReference>
<dbReference type="PANTHER" id="PTHR16262:SF2">
    <property type="entry name" value="PEROXISOME ASSEMBLY PROTEIN 26"/>
    <property type="match status" value="1"/>
</dbReference>
<dbReference type="Pfam" id="PF07163">
    <property type="entry name" value="Pex26"/>
    <property type="match status" value="1"/>
</dbReference>
<name>PEX26_MACFA</name>
<reference key="1">
    <citation type="submission" date="2001-03" db="EMBL/GenBank/DDBJ databases">
        <title>Isolation of full-length cDNA clones from macaque brain cDNA libraries.</title>
        <authorList>
            <person name="Osada N."/>
            <person name="Hida M."/>
            <person name="Kusuda J."/>
            <person name="Tanuma R."/>
            <person name="Iseki K."/>
            <person name="Hirai M."/>
            <person name="Terao K."/>
            <person name="Suzuki Y."/>
            <person name="Sugano S."/>
            <person name="Hashimoto K."/>
        </authorList>
    </citation>
    <scope>NUCLEOTIDE SEQUENCE [LARGE SCALE MRNA]</scope>
    <source>
        <tissue>Brain cortex</tissue>
        <tissue>Frontal cortex</tissue>
    </source>
</reference>
<accession>Q9BE65</accession>
<accession>Q9N0D4</accession>
<keyword id="KW-0472">Membrane</keyword>
<keyword id="KW-0576">Peroxisome</keyword>
<keyword id="KW-0653">Protein transport</keyword>
<keyword id="KW-1185">Reference proteome</keyword>
<keyword id="KW-0735">Signal-anchor</keyword>
<keyword id="KW-0812">Transmembrane</keyword>
<keyword id="KW-1133">Transmembrane helix</keyword>
<keyword id="KW-0813">Transport</keyword>
<evidence type="ECO:0000250" key="1">
    <source>
        <dbReference type="UniProtKB" id="Q7Z412"/>
    </source>
</evidence>
<evidence type="ECO:0000255" key="2"/>
<evidence type="ECO:0000256" key="3">
    <source>
        <dbReference type="SAM" id="MobiDB-lite"/>
    </source>
</evidence>
<evidence type="ECO:0000305" key="4"/>
<feature type="chain" id="PRO_0000058341" description="Peroxisome assembly protein 26">
    <location>
        <begin position="1"/>
        <end position="305"/>
    </location>
</feature>
<feature type="topological domain" description="Cytoplasmic" evidence="1">
    <location>
        <begin position="1"/>
        <end position="246"/>
    </location>
</feature>
<feature type="transmembrane region" description="Helical; Signal-anchor for type II membrane protein" evidence="2">
    <location>
        <begin position="247"/>
        <end position="267"/>
    </location>
</feature>
<feature type="topological domain" description="Peroxisomal matrix" evidence="1">
    <location>
        <begin position="268"/>
        <end position="305"/>
    </location>
</feature>
<feature type="region of interest" description="Disordered" evidence="3">
    <location>
        <begin position="1"/>
        <end position="25"/>
    </location>
</feature>
<feature type="sequence conflict" description="In Ref. 1; BAB01578." evidence="4" ref="1">
    <original>P</original>
    <variation>L</variation>
    <location>
        <position position="29"/>
    </location>
</feature>
<feature type="sequence conflict" description="In Ref. 1; BAB01578." evidence="4" ref="1">
    <original>K</original>
    <variation>R</variation>
    <location>
        <position position="82"/>
    </location>
</feature>
<feature type="sequence conflict" description="In Ref. 1; BAB01578." evidence="4" ref="1">
    <original>V</original>
    <variation>A</variation>
    <location>
        <position position="102"/>
    </location>
</feature>
<feature type="sequence conflict" description="In Ref. 1; BAB01578." evidence="4" ref="1">
    <original>R</original>
    <variation>K</variation>
    <location>
        <position position="135"/>
    </location>
</feature>
<feature type="sequence conflict" description="In Ref. 1; BAB01578." evidence="4" ref="1">
    <original>E</original>
    <variation>K</variation>
    <location>
        <position position="155"/>
    </location>
</feature>
<feature type="sequence conflict" description="In Ref. 1; BAB01578." evidence="4" ref="1">
    <original>S</original>
    <variation>F</variation>
    <location>
        <position position="279"/>
    </location>
</feature>
<sequence>MKSDCSTSAAPFRGLGGPLRSSEPVRAAPARSPAVDLLEEAADLLVVHLDFRAALETCERAWQSLANHALPEEPAGTSLEVKCSLCVVGIQALAEMDRWQEVLSWVLQYYQVPEKLPPKVLELCILLYSKMQEPRAVLDVVGAWLQDPANQDLPEYGALAEFHVQRVLLPLGCLSEAEELVVGSAAFGEERRLDVLQAIHTARQQQQQEHSGSEEAQKPNEEGSVSHKFLSLPMLVRQLWDSAVSHFFSLPFKKSLLAALILCLLVVRFDPASPSSLPSLYKLAQLFRWIRKAASSRLYQLRIRD</sequence>
<gene>
    <name type="primary">PEX26</name>
    <name type="ORF">QccE-11782</name>
    <name type="ORF">QflA-13707</name>
</gene>
<proteinExistence type="evidence at transcript level"/>
<organism>
    <name type="scientific">Macaca fascicularis</name>
    <name type="common">Crab-eating macaque</name>
    <name type="synonym">Cynomolgus monkey</name>
    <dbReference type="NCBI Taxonomy" id="9541"/>
    <lineage>
        <taxon>Eukaryota</taxon>
        <taxon>Metazoa</taxon>
        <taxon>Chordata</taxon>
        <taxon>Craniata</taxon>
        <taxon>Vertebrata</taxon>
        <taxon>Euteleostomi</taxon>
        <taxon>Mammalia</taxon>
        <taxon>Eutheria</taxon>
        <taxon>Euarchontoglires</taxon>
        <taxon>Primates</taxon>
        <taxon>Haplorrhini</taxon>
        <taxon>Catarrhini</taxon>
        <taxon>Cercopithecidae</taxon>
        <taxon>Cercopithecinae</taxon>
        <taxon>Macaca</taxon>
    </lineage>
</organism>
<comment type="function">
    <text evidence="1">Peroxisomal docking factor that anchors PEX1 and PEX6 to peroxisome membranes. PEX26 is therefore required for the formation of the PEX1-PEX6 AAA ATPase complex, a complex that mediates the extraction of the PEX5 receptor from peroxisomal membrane.</text>
</comment>
<comment type="subunit">
    <text evidence="1">Interacts (via its cytoplasmic domain) with PEX6; interaction is direct and is ATP-dependent. Interacts with PEX1; interaction is indirect and is mediated via interaction with PEX6.</text>
</comment>
<comment type="subcellular location">
    <subcellularLocation>
        <location evidence="1">Peroxisome membrane</location>
        <topology evidence="1">Single-pass type II membrane protein</topology>
    </subcellularLocation>
</comment>
<comment type="similarity">
    <text evidence="4">Belongs to the peroxin-26 family.</text>
</comment>